<proteinExistence type="inferred from homology"/>
<dbReference type="EC" id="2.2.1.6"/>
<dbReference type="EMBL" id="Z99263">
    <property type="protein sequence ID" value="CAB16435.1"/>
    <property type="molecule type" value="Genomic_DNA"/>
</dbReference>
<dbReference type="EMBL" id="AL583923">
    <property type="protein sequence ID" value="CAC30649.1"/>
    <property type="molecule type" value="Genomic_DNA"/>
</dbReference>
<dbReference type="PIR" id="T45413">
    <property type="entry name" value="T45413"/>
</dbReference>
<dbReference type="RefSeq" id="NP_302166.1">
    <property type="nucleotide sequence ID" value="NC_002677.1"/>
</dbReference>
<dbReference type="RefSeq" id="WP_010908487.1">
    <property type="nucleotide sequence ID" value="NC_002677.1"/>
</dbReference>
<dbReference type="SMR" id="O33112"/>
<dbReference type="STRING" id="272631.gene:17575541"/>
<dbReference type="KEGG" id="mle:ML1696"/>
<dbReference type="PATRIC" id="fig|272631.5.peg.3199"/>
<dbReference type="Leproma" id="ML1696"/>
<dbReference type="eggNOG" id="COG0028">
    <property type="taxonomic scope" value="Bacteria"/>
</dbReference>
<dbReference type="HOGENOM" id="CLU_013748_1_2_11"/>
<dbReference type="OrthoDB" id="4494979at2"/>
<dbReference type="UniPathway" id="UPA00047">
    <property type="reaction ID" value="UER00055"/>
</dbReference>
<dbReference type="UniPathway" id="UPA00049">
    <property type="reaction ID" value="UER00059"/>
</dbReference>
<dbReference type="Proteomes" id="UP000000806">
    <property type="component" value="Chromosome"/>
</dbReference>
<dbReference type="GO" id="GO:0005948">
    <property type="term" value="C:acetolactate synthase complex"/>
    <property type="evidence" value="ECO:0007669"/>
    <property type="project" value="TreeGrafter"/>
</dbReference>
<dbReference type="GO" id="GO:0003984">
    <property type="term" value="F:acetolactate synthase activity"/>
    <property type="evidence" value="ECO:0007669"/>
    <property type="project" value="UniProtKB-EC"/>
</dbReference>
<dbReference type="GO" id="GO:0050660">
    <property type="term" value="F:flavin adenine dinucleotide binding"/>
    <property type="evidence" value="ECO:0007669"/>
    <property type="project" value="InterPro"/>
</dbReference>
<dbReference type="GO" id="GO:0000287">
    <property type="term" value="F:magnesium ion binding"/>
    <property type="evidence" value="ECO:0007669"/>
    <property type="project" value="InterPro"/>
</dbReference>
<dbReference type="GO" id="GO:0030976">
    <property type="term" value="F:thiamine pyrophosphate binding"/>
    <property type="evidence" value="ECO:0007669"/>
    <property type="project" value="InterPro"/>
</dbReference>
<dbReference type="GO" id="GO:0009097">
    <property type="term" value="P:isoleucine biosynthetic process"/>
    <property type="evidence" value="ECO:0007669"/>
    <property type="project" value="UniProtKB-UniPathway"/>
</dbReference>
<dbReference type="GO" id="GO:0009099">
    <property type="term" value="P:L-valine biosynthetic process"/>
    <property type="evidence" value="ECO:0007669"/>
    <property type="project" value="UniProtKB-UniPathway"/>
</dbReference>
<dbReference type="CDD" id="cd02015">
    <property type="entry name" value="TPP_AHAS"/>
    <property type="match status" value="1"/>
</dbReference>
<dbReference type="CDD" id="cd07035">
    <property type="entry name" value="TPP_PYR_POX_like"/>
    <property type="match status" value="1"/>
</dbReference>
<dbReference type="FunFam" id="3.40.50.1220:FF:000008">
    <property type="entry name" value="Acetolactate synthase"/>
    <property type="match status" value="1"/>
</dbReference>
<dbReference type="FunFam" id="3.40.50.970:FF:000007">
    <property type="entry name" value="Acetolactate synthase"/>
    <property type="match status" value="1"/>
</dbReference>
<dbReference type="FunFam" id="3.40.50.970:FF:000016">
    <property type="entry name" value="Acetolactate synthase"/>
    <property type="match status" value="1"/>
</dbReference>
<dbReference type="Gene3D" id="3.40.50.970">
    <property type="match status" value="2"/>
</dbReference>
<dbReference type="Gene3D" id="3.40.50.1220">
    <property type="entry name" value="TPP-binding domain"/>
    <property type="match status" value="1"/>
</dbReference>
<dbReference type="InterPro" id="IPR012846">
    <property type="entry name" value="Acetolactate_synth_lsu"/>
</dbReference>
<dbReference type="InterPro" id="IPR039368">
    <property type="entry name" value="AHAS_TPP"/>
</dbReference>
<dbReference type="InterPro" id="IPR029035">
    <property type="entry name" value="DHS-like_NAD/FAD-binding_dom"/>
</dbReference>
<dbReference type="InterPro" id="IPR029061">
    <property type="entry name" value="THDP-binding"/>
</dbReference>
<dbReference type="InterPro" id="IPR012000">
    <property type="entry name" value="Thiamin_PyroP_enz_cen_dom"/>
</dbReference>
<dbReference type="InterPro" id="IPR012001">
    <property type="entry name" value="Thiamin_PyroP_enz_TPP-bd_dom"/>
</dbReference>
<dbReference type="InterPro" id="IPR000399">
    <property type="entry name" value="TPP-bd_CS"/>
</dbReference>
<dbReference type="InterPro" id="IPR045229">
    <property type="entry name" value="TPP_enz"/>
</dbReference>
<dbReference type="InterPro" id="IPR011766">
    <property type="entry name" value="TPP_enzyme_TPP-bd"/>
</dbReference>
<dbReference type="NCBIfam" id="TIGR00118">
    <property type="entry name" value="acolac_lg"/>
    <property type="match status" value="1"/>
</dbReference>
<dbReference type="NCBIfam" id="NF005860">
    <property type="entry name" value="PRK07789.1"/>
    <property type="match status" value="1"/>
</dbReference>
<dbReference type="PANTHER" id="PTHR18968:SF13">
    <property type="entry name" value="ACETOLACTATE SYNTHASE CATALYTIC SUBUNIT, MITOCHONDRIAL"/>
    <property type="match status" value="1"/>
</dbReference>
<dbReference type="PANTHER" id="PTHR18968">
    <property type="entry name" value="THIAMINE PYROPHOSPHATE ENZYMES"/>
    <property type="match status" value="1"/>
</dbReference>
<dbReference type="Pfam" id="PF02775">
    <property type="entry name" value="TPP_enzyme_C"/>
    <property type="match status" value="1"/>
</dbReference>
<dbReference type="Pfam" id="PF00205">
    <property type="entry name" value="TPP_enzyme_M"/>
    <property type="match status" value="1"/>
</dbReference>
<dbReference type="Pfam" id="PF02776">
    <property type="entry name" value="TPP_enzyme_N"/>
    <property type="match status" value="1"/>
</dbReference>
<dbReference type="SUPFAM" id="SSF52467">
    <property type="entry name" value="DHS-like NAD/FAD-binding domain"/>
    <property type="match status" value="1"/>
</dbReference>
<dbReference type="SUPFAM" id="SSF52518">
    <property type="entry name" value="Thiamin diphosphate-binding fold (THDP-binding)"/>
    <property type="match status" value="2"/>
</dbReference>
<dbReference type="PROSITE" id="PS00187">
    <property type="entry name" value="TPP_ENZYMES"/>
    <property type="match status" value="1"/>
</dbReference>
<comment type="catalytic activity">
    <reaction>
        <text>2 pyruvate + H(+) = (2S)-2-acetolactate + CO2</text>
        <dbReference type="Rhea" id="RHEA:25249"/>
        <dbReference type="ChEBI" id="CHEBI:15361"/>
        <dbReference type="ChEBI" id="CHEBI:15378"/>
        <dbReference type="ChEBI" id="CHEBI:16526"/>
        <dbReference type="ChEBI" id="CHEBI:58476"/>
        <dbReference type="EC" id="2.2.1.6"/>
    </reaction>
</comment>
<comment type="cofactor">
    <cofactor evidence="1">
        <name>Mg(2+)</name>
        <dbReference type="ChEBI" id="CHEBI:18420"/>
    </cofactor>
    <text evidence="1">Binds 1 Mg(2+) ion per subunit.</text>
</comment>
<comment type="cofactor">
    <cofactor evidence="1">
        <name>thiamine diphosphate</name>
        <dbReference type="ChEBI" id="CHEBI:58937"/>
    </cofactor>
    <text evidence="1">Binds 1 thiamine pyrophosphate per subunit.</text>
</comment>
<comment type="pathway">
    <text>Amino-acid biosynthesis; L-isoleucine biosynthesis; L-isoleucine from 2-oxobutanoate: step 1/4.</text>
</comment>
<comment type="pathway">
    <text>Amino-acid biosynthesis; L-valine biosynthesis; L-valine from pyruvate: step 1/4.</text>
</comment>
<comment type="similarity">
    <text evidence="3">Belongs to the TPP enzyme family.</text>
</comment>
<organism>
    <name type="scientific">Mycobacterium leprae (strain TN)</name>
    <dbReference type="NCBI Taxonomy" id="272631"/>
    <lineage>
        <taxon>Bacteria</taxon>
        <taxon>Bacillati</taxon>
        <taxon>Actinomycetota</taxon>
        <taxon>Actinomycetes</taxon>
        <taxon>Mycobacteriales</taxon>
        <taxon>Mycobacteriaceae</taxon>
        <taxon>Mycobacterium</taxon>
    </lineage>
</organism>
<protein>
    <recommendedName>
        <fullName>Acetolactate synthase</fullName>
        <ecNumber>2.2.1.6</ecNumber>
    </recommendedName>
    <alternativeName>
        <fullName>ALS</fullName>
    </alternativeName>
    <alternativeName>
        <fullName>Acetohydroxy-acid synthase</fullName>
    </alternativeName>
</protein>
<keyword id="KW-0028">Amino-acid biosynthesis</keyword>
<keyword id="KW-0100">Branched-chain amino acid biosynthesis</keyword>
<keyword id="KW-0274">FAD</keyword>
<keyword id="KW-0285">Flavoprotein</keyword>
<keyword id="KW-0460">Magnesium</keyword>
<keyword id="KW-0479">Metal-binding</keyword>
<keyword id="KW-1185">Reference proteome</keyword>
<keyword id="KW-0786">Thiamine pyrophosphate</keyword>
<keyword id="KW-0808">Transferase</keyword>
<evidence type="ECO:0000250" key="1"/>
<evidence type="ECO:0000256" key="2">
    <source>
        <dbReference type="SAM" id="MobiDB-lite"/>
    </source>
</evidence>
<evidence type="ECO:0000305" key="3"/>
<gene>
    <name type="primary">ilvB</name>
    <name type="ordered locus">ML1696</name>
    <name type="ORF">MLCB637.20</name>
</gene>
<accession>O33112</accession>
<name>ILVB_MYCLE</name>
<reference key="1">
    <citation type="journal article" date="2001" name="Nature">
        <title>Massive gene decay in the leprosy bacillus.</title>
        <authorList>
            <person name="Cole S.T."/>
            <person name="Eiglmeier K."/>
            <person name="Parkhill J."/>
            <person name="James K.D."/>
            <person name="Thomson N.R."/>
            <person name="Wheeler P.R."/>
            <person name="Honore N."/>
            <person name="Garnier T."/>
            <person name="Churcher C.M."/>
            <person name="Harris D.E."/>
            <person name="Mungall K.L."/>
            <person name="Basham D."/>
            <person name="Brown D."/>
            <person name="Chillingworth T."/>
            <person name="Connor R."/>
            <person name="Davies R.M."/>
            <person name="Devlin K."/>
            <person name="Duthoy S."/>
            <person name="Feltwell T."/>
            <person name="Fraser A."/>
            <person name="Hamlin N."/>
            <person name="Holroyd S."/>
            <person name="Hornsby T."/>
            <person name="Jagels K."/>
            <person name="Lacroix C."/>
            <person name="Maclean J."/>
            <person name="Moule S."/>
            <person name="Murphy L.D."/>
            <person name="Oliver K."/>
            <person name="Quail M.A."/>
            <person name="Rajandream M.A."/>
            <person name="Rutherford K.M."/>
            <person name="Rutter S."/>
            <person name="Seeger K."/>
            <person name="Simon S."/>
            <person name="Simmonds M."/>
            <person name="Skelton J."/>
            <person name="Squares R."/>
            <person name="Squares S."/>
            <person name="Stevens K."/>
            <person name="Taylor K."/>
            <person name="Whitehead S."/>
            <person name="Woodward J.R."/>
            <person name="Barrell B.G."/>
        </authorList>
    </citation>
    <scope>NUCLEOTIDE SEQUENCE [LARGE SCALE GENOMIC DNA]</scope>
    <source>
        <strain>TN</strain>
    </source>
</reference>
<sequence>MSAPTKPHARPQGAGNSVPNTVKPATQFPSKPAVAKLERVSPEQLTGAQSVIRSLEELDVEVIFGIPGGAVLLVYDPLFYSKKLRHVLVRHEQGAGHAASGYAHVTGKVGVCMATSGPGATNLVTPLADAQMDSVPVVAITGQVGRSLIGTDAFQEADISGITMPITKHNFLVRAGDDIPRVLAEAFHIASSGRPGAVLVDIPKDVLQGQCKFSWPPKMDLPGYKPNTKPHNRQIRAAAKLIADARKPVLYVGGGVIRGEATEQLRDLAELTGIPVVSTLMARGAFPDSHHQNLGMPGMHGTVAAVAALQRSDLLIALGTRFDDRVTGKLDSFAPDAKVIHADIDPAEIGKNRHADVPIVGDVKAVIVELIAMLRHYEVPGNIEMTDWWSYLDGVRKTYPLSYSPQSDGTLSPEYVIEKLGEIVGPEAVYVAGVGQHQMWAAQFISYEKPRTWLNSGGLGTMGFAIPAAMGAKIARPEAEVWAIDGDGCFQMTNQELATCAIEGAPIKVALINNGNLGMVRQWQALFYQERYSQTDLATHSHRIPDFVKLAEALGCVGLRCECEEDVVDVINQARAINNRPVVIDFIVGADAQVWPMVAAGASNDEIQAARGIRPLFDDESEGHV</sequence>
<feature type="chain" id="PRO_0000090802" description="Acetolactate synthase">
    <location>
        <begin position="1"/>
        <end position="625"/>
    </location>
</feature>
<feature type="region of interest" description="Disordered" evidence="2">
    <location>
        <begin position="1"/>
        <end position="29"/>
    </location>
</feature>
<feature type="region of interest" description="Thiamine pyrophosphate binding">
    <location>
        <begin position="436"/>
        <end position="516"/>
    </location>
</feature>
<feature type="compositionally biased region" description="Polar residues" evidence="2">
    <location>
        <begin position="14"/>
        <end position="29"/>
    </location>
</feature>
<feature type="binding site" evidence="1">
    <location>
        <position position="92"/>
    </location>
    <ligand>
        <name>thiamine diphosphate</name>
        <dbReference type="ChEBI" id="CHEBI:58937"/>
    </ligand>
</feature>
<feature type="binding site" evidence="1">
    <location>
        <position position="194"/>
    </location>
    <ligand>
        <name>FAD</name>
        <dbReference type="ChEBI" id="CHEBI:57692"/>
    </ligand>
</feature>
<feature type="binding site" evidence="1">
    <location>
        <begin position="300"/>
        <end position="321"/>
    </location>
    <ligand>
        <name>FAD</name>
        <dbReference type="ChEBI" id="CHEBI:57692"/>
    </ligand>
</feature>
<feature type="binding site" evidence="1">
    <location>
        <begin position="343"/>
        <end position="362"/>
    </location>
    <ligand>
        <name>FAD</name>
        <dbReference type="ChEBI" id="CHEBI:57692"/>
    </ligand>
</feature>
<feature type="binding site" evidence="1">
    <location>
        <position position="487"/>
    </location>
    <ligand>
        <name>Mg(2+)</name>
        <dbReference type="ChEBI" id="CHEBI:18420"/>
    </ligand>
</feature>
<feature type="binding site" evidence="1">
    <location>
        <position position="514"/>
    </location>
    <ligand>
        <name>Mg(2+)</name>
        <dbReference type="ChEBI" id="CHEBI:18420"/>
    </ligand>
</feature>